<protein>
    <recommendedName>
        <fullName>Ferredoxin--nitrite reductase, chloroplastic</fullName>
        <ecNumber>1.7.7.1</ecNumber>
    </recommendedName>
</protein>
<gene>
    <name type="primary">NIR1</name>
</gene>
<keyword id="KW-0004">4Fe-4S</keyword>
<keyword id="KW-0150">Chloroplast</keyword>
<keyword id="KW-0249">Electron transport</keyword>
<keyword id="KW-0349">Heme</keyword>
<keyword id="KW-0408">Iron</keyword>
<keyword id="KW-0411">Iron-sulfur</keyword>
<keyword id="KW-0479">Metal-binding</keyword>
<keyword id="KW-0534">Nitrate assimilation</keyword>
<keyword id="KW-0560">Oxidoreductase</keyword>
<keyword id="KW-0934">Plastid</keyword>
<keyword id="KW-0809">Transit peptide</keyword>
<keyword id="KW-0813">Transport</keyword>
<evidence type="ECO:0000250" key="1"/>
<evidence type="ECO:0000255" key="2"/>
<evidence type="ECO:0000305" key="3"/>
<reference key="1">
    <citation type="journal article" date="1992" name="Mol. Gen. Genet.">
        <title>Sequence of a cDNA encoding nitrite reductase from the tree Betula pendula and identification of conserved protein regions.</title>
        <authorList>
            <person name="Friemann A."/>
            <person name="Brinkmann K."/>
            <person name="Hachtel W."/>
        </authorList>
    </citation>
    <scope>NUCLEOTIDE SEQUENCE [MRNA]</scope>
    <source>
        <tissue>Leaf</tissue>
    </source>
</reference>
<proteinExistence type="evidence at transcript level"/>
<organism>
    <name type="scientific">Betula pendula</name>
    <name type="common">European white birch</name>
    <name type="synonym">Betula verrucosa</name>
    <dbReference type="NCBI Taxonomy" id="3505"/>
    <lineage>
        <taxon>Eukaryota</taxon>
        <taxon>Viridiplantae</taxon>
        <taxon>Streptophyta</taxon>
        <taxon>Embryophyta</taxon>
        <taxon>Tracheophyta</taxon>
        <taxon>Spermatophyta</taxon>
        <taxon>Magnoliopsida</taxon>
        <taxon>eudicotyledons</taxon>
        <taxon>Gunneridae</taxon>
        <taxon>Pentapetalae</taxon>
        <taxon>rosids</taxon>
        <taxon>fabids</taxon>
        <taxon>Fagales</taxon>
        <taxon>Betulaceae</taxon>
        <taxon>Betula</taxon>
    </lineage>
</organism>
<comment type="catalytic activity">
    <reaction>
        <text>6 oxidized [2Fe-2S]-[ferredoxin] + NH4(+) + 2 H2O = nitrite + 6 reduced [2Fe-2S]-[ferredoxin] + 8 H(+)</text>
        <dbReference type="Rhea" id="RHEA:18041"/>
        <dbReference type="Rhea" id="RHEA-COMP:10000"/>
        <dbReference type="Rhea" id="RHEA-COMP:10001"/>
        <dbReference type="ChEBI" id="CHEBI:15377"/>
        <dbReference type="ChEBI" id="CHEBI:15378"/>
        <dbReference type="ChEBI" id="CHEBI:16301"/>
        <dbReference type="ChEBI" id="CHEBI:28938"/>
        <dbReference type="ChEBI" id="CHEBI:33737"/>
        <dbReference type="ChEBI" id="CHEBI:33738"/>
        <dbReference type="EC" id="1.7.7.1"/>
    </reaction>
</comment>
<comment type="cofactor">
    <cofactor>
        <name>siroheme</name>
        <dbReference type="ChEBI" id="CHEBI:60052"/>
    </cofactor>
    <text>Binds 1 siroheme per subunit.</text>
</comment>
<comment type="cofactor">
    <cofactor evidence="1">
        <name>[4Fe-4S] cluster</name>
        <dbReference type="ChEBI" id="CHEBI:49883"/>
    </cofactor>
    <text evidence="1">Binds 1 [4Fe-4S] cluster per subunit.</text>
</comment>
<comment type="pathway">
    <text>Nitrogen metabolism; nitrate reduction (assimilation).</text>
</comment>
<comment type="subunit">
    <text>Monomer.</text>
</comment>
<comment type="subcellular location">
    <subcellularLocation>
        <location evidence="1">Plastid</location>
        <location evidence="1">Chloroplast</location>
    </subcellularLocation>
</comment>
<comment type="induction">
    <text>By nitrate.</text>
</comment>
<comment type="similarity">
    <text evidence="3">Belongs to the nitrite and sulfite reductase 4Fe-4S domain family.</text>
</comment>
<name>NIR_BETPN</name>
<feature type="transit peptide" description="Chloroplast" evidence="2">
    <location>
        <begin position="1"/>
        <end position="22"/>
    </location>
</feature>
<feature type="chain" id="PRO_0000019704" description="Ferredoxin--nitrite reductase, chloroplastic">
    <location>
        <begin position="23"/>
        <end position="583"/>
    </location>
</feature>
<feature type="binding site" evidence="1">
    <location>
        <position position="461"/>
    </location>
    <ligand>
        <name>[4Fe-4S] cluster</name>
        <dbReference type="ChEBI" id="CHEBI:49883"/>
    </ligand>
</feature>
<feature type="binding site" evidence="1">
    <location>
        <position position="467"/>
    </location>
    <ligand>
        <name>[4Fe-4S] cluster</name>
        <dbReference type="ChEBI" id="CHEBI:49883"/>
    </ligand>
</feature>
<feature type="binding site" evidence="1">
    <location>
        <position position="502"/>
    </location>
    <ligand>
        <name>[4Fe-4S] cluster</name>
        <dbReference type="ChEBI" id="CHEBI:49883"/>
    </ligand>
</feature>
<feature type="binding site" evidence="1">
    <location>
        <position position="506"/>
    </location>
    <ligand>
        <name>[4Fe-4S] cluster</name>
        <dbReference type="ChEBI" id="CHEBI:49883"/>
    </ligand>
</feature>
<feature type="binding site" description="axial binding residue" evidence="1">
    <location>
        <position position="506"/>
    </location>
    <ligand>
        <name>siroheme</name>
        <dbReference type="ChEBI" id="CHEBI:60052"/>
    </ligand>
    <ligandPart>
        <name>Fe</name>
        <dbReference type="ChEBI" id="CHEBI:18248"/>
    </ligandPart>
</feature>
<dbReference type="EC" id="1.7.7.1"/>
<dbReference type="EMBL" id="X60093">
    <property type="protein sequence ID" value="CAA42690.1"/>
    <property type="molecule type" value="mRNA"/>
</dbReference>
<dbReference type="PIR" id="S20495">
    <property type="entry name" value="S20495"/>
</dbReference>
<dbReference type="SMR" id="P38500"/>
<dbReference type="UniPathway" id="UPA00653"/>
<dbReference type="GO" id="GO:0009507">
    <property type="term" value="C:chloroplast"/>
    <property type="evidence" value="ECO:0007669"/>
    <property type="project" value="UniProtKB-SubCell"/>
</dbReference>
<dbReference type="GO" id="GO:0051539">
    <property type="term" value="F:4 iron, 4 sulfur cluster binding"/>
    <property type="evidence" value="ECO:0007669"/>
    <property type="project" value="UniProtKB-KW"/>
</dbReference>
<dbReference type="GO" id="GO:0048307">
    <property type="term" value="F:ferredoxin-nitrite reductase activity"/>
    <property type="evidence" value="ECO:0007669"/>
    <property type="project" value="UniProtKB-EC"/>
</dbReference>
<dbReference type="GO" id="GO:0020037">
    <property type="term" value="F:heme binding"/>
    <property type="evidence" value="ECO:0007669"/>
    <property type="project" value="InterPro"/>
</dbReference>
<dbReference type="GO" id="GO:0046872">
    <property type="term" value="F:metal ion binding"/>
    <property type="evidence" value="ECO:0007669"/>
    <property type="project" value="UniProtKB-KW"/>
</dbReference>
<dbReference type="GO" id="GO:0042128">
    <property type="term" value="P:nitrate assimilation"/>
    <property type="evidence" value="ECO:0007669"/>
    <property type="project" value="UniProtKB-UniPathway"/>
</dbReference>
<dbReference type="Gene3D" id="3.90.480.20">
    <property type="match status" value="1"/>
</dbReference>
<dbReference type="Gene3D" id="3.30.413.10">
    <property type="entry name" value="Sulfite Reductase Hemoprotein, domain 1"/>
    <property type="match status" value="2"/>
</dbReference>
<dbReference type="InterPro" id="IPR051329">
    <property type="entry name" value="NIR_SIR_4Fe-4S"/>
</dbReference>
<dbReference type="InterPro" id="IPR005117">
    <property type="entry name" value="NiRdtase/SiRdtase_haem-b_fer"/>
</dbReference>
<dbReference type="InterPro" id="IPR036136">
    <property type="entry name" value="Nit/Sulf_reduc_fer-like_dom_sf"/>
</dbReference>
<dbReference type="InterPro" id="IPR006067">
    <property type="entry name" value="NO2/SO3_Rdtase_4Fe4S_dom"/>
</dbReference>
<dbReference type="InterPro" id="IPR045854">
    <property type="entry name" value="NO2/SO3_Rdtase_4Fe4S_sf"/>
</dbReference>
<dbReference type="InterPro" id="IPR006066">
    <property type="entry name" value="NO2/SO3_Rdtase_FeS/sirohaem_BS"/>
</dbReference>
<dbReference type="NCBIfam" id="NF007125">
    <property type="entry name" value="PRK09566.1"/>
    <property type="match status" value="1"/>
</dbReference>
<dbReference type="PANTHER" id="PTHR32439">
    <property type="entry name" value="FERREDOXIN--NITRITE REDUCTASE, CHLOROPLASTIC"/>
    <property type="match status" value="1"/>
</dbReference>
<dbReference type="PANTHER" id="PTHR32439:SF0">
    <property type="entry name" value="FERREDOXIN--NITRITE REDUCTASE, CHLOROPLASTIC"/>
    <property type="match status" value="1"/>
</dbReference>
<dbReference type="Pfam" id="PF01077">
    <property type="entry name" value="NIR_SIR"/>
    <property type="match status" value="2"/>
</dbReference>
<dbReference type="Pfam" id="PF03460">
    <property type="entry name" value="NIR_SIR_ferr"/>
    <property type="match status" value="2"/>
</dbReference>
<dbReference type="PRINTS" id="PR00397">
    <property type="entry name" value="SIROHAEM"/>
</dbReference>
<dbReference type="SUPFAM" id="SSF56014">
    <property type="entry name" value="Nitrite and sulphite reductase 4Fe-4S domain-like"/>
    <property type="match status" value="2"/>
</dbReference>
<dbReference type="SUPFAM" id="SSF55124">
    <property type="entry name" value="Nitrite/Sulfite reductase N-terminal domain-like"/>
    <property type="match status" value="2"/>
</dbReference>
<dbReference type="PROSITE" id="PS00365">
    <property type="entry name" value="NIR_SIR"/>
    <property type="match status" value="1"/>
</dbReference>
<accession>P38500</accession>
<sequence length="583" mass="65229">MSSLSVRFLSPPLFSSTPAWPRTGLAATQAVPPVVAEVDAGRLEPRVEEREGYWVLKEKFREGINPQEKLKLEREPMKLFMEGGIEDLAKMSLEEIDKDKISKSDIDVRLKWLGLFHRRKHHYGRFMMRLKLPNGVTTSAQTRYLASVIRKYGKDGCADVTTRQNWQIRGVVLSDVPEILKGLDEVGLTSLQSGMDNVRNPVGNPLAGIDIHEIVATRPYNNLLSQFITANSRGNLAFTNLPRKWNVCVVGSHDLFEHPHINDLAYMPAIKDGRFGFNLLVGGFFSPRRCAEAVPLDAWVSADDIILVCKAILEAYRDLGTRGNRQKTRMMWLIDELGIEGFRSEVVKRMPNQELERAAPEDLIEKQWERRELIGVHPQKQEGLSYVGLHIPVGRVQADDMDELARLADTYGCGELRLTVEQNIIIPNIENSKLEALLGEPLLKDRFSPEPPILMKGLVACTGNQFCGQAIIETKARALKVTEEVQRQVAVTRPVRMHWTGCPNSCGQVQVADIGFMGCMARDENGKPCEGAAVFLGGRIGSDSHLGNLYKKGVPCKNLVPLVVDILVKHFGAVPREREESED</sequence>